<reference key="1">
    <citation type="journal article" date="2014" name="Antimicrob. Agents Chemother.">
        <title>Identification of capsular types in carbapenem-resistant Klebsiella pneumoniae strains by wzc sequencing and implications in capsule depolymerase treatment.</title>
        <authorList>
            <person name="Pan Y.-J."/>
            <person name="Lin T.-L."/>
            <person name="Lin Y.-T."/>
            <person name="Su P.-A."/>
            <person name="Chen C.-T."/>
            <person name="Hsieh P.-F."/>
            <person name="Hsu C.-R."/>
            <person name="Chen C.-C."/>
            <person name="Hsieh Y.-C."/>
            <person name="Wang J.-T."/>
        </authorList>
    </citation>
    <scope>NUCLEOTIDE SEQUENCE [LARGE SCALE GENOMIC DNA]</scope>
</reference>
<reference key="2">
    <citation type="journal article" date="2017" name="J. Virol.">
        <title>Klebsiella Phage PhiK64-1 Encodes Multiple Depolymerases for Multiple Host Capsular Types.</title>
        <authorList>
            <person name="Pan Y.-J."/>
            <person name="Lin T.-L."/>
            <person name="Chen C.-C."/>
            <person name="Tsai Y.-T."/>
            <person name="Cheng Y.-H."/>
            <person name="Chen Y.-Y."/>
            <person name="Hsieh P.-F."/>
            <person name="Lin Y.-T."/>
            <person name="Wang J.-T."/>
        </authorList>
    </citation>
    <scope>NUCLEOTIDE SEQUENCE [GENOMIC DNA]</scope>
    <scope>FUNCTION (MATURE TAIL SPIKE PROTEIN)</scope>
</reference>
<reference key="3">
    <citation type="journal article" date="2019" name="Front. Microbiol.">
        <title>Modeling the Architecture of Depolymerase-Containing Receptor Binding Proteins in Klebsiella Phages.</title>
        <authorList>
            <person name="Latka A."/>
            <person name="Leiman P.G."/>
            <person name="Drulis-Kawa Z."/>
            <person name="Briers Y."/>
        </authorList>
    </citation>
    <scope>REVIEW</scope>
</reference>
<comment type="function">
    <molecule>Mature tail spike protein</molecule>
    <text evidence="5 7">Functions as a receptor binding protein (RBP) and probably mediates the attachment to the host capsular exopolysaccharides (Probable). Displays a depolymerase activity that specifically degrades the K35-type polysaccharides of Klebsiella pneumoniae capsule (PubMed:28077636).</text>
</comment>
<comment type="function">
    <molecule>Intramolecular chaperone</molecule>
    <text evidence="3">The C-terminal chaperone protein mediates homotrimerization and proper folding of the catalytic trimer.</text>
</comment>
<comment type="subcellular location">
    <molecule>Mature tail spike protein</molecule>
    <subcellularLocation>
        <location evidence="6">Virion</location>
    </subcellularLocation>
    <text evidence="6">Tail appendage.</text>
</comment>
<comment type="PTM">
    <molecule>Probable tail spike protein</molecule>
    <text evidence="2 3">Proteolytic cleavage and release of the chaperone in the host cytosol stabilizes the folded protein (By similarity). The cleavage gives rise to the mature tail spike protein but is not essential for catalytic activity (By similarity).</text>
</comment>
<keyword id="KW-1238">Degradation of host capsule during virus entry</keyword>
<keyword id="KW-1235">Degradation of host cell envelope components during virus entry</keyword>
<keyword id="KW-0945">Host-virus interaction</keyword>
<keyword id="KW-0378">Hydrolase</keyword>
<keyword id="KW-0456">Lyase</keyword>
<keyword id="KW-0645">Protease</keyword>
<keyword id="KW-1185">Reference proteome</keyword>
<keyword id="KW-1233">Viral attachment to host adhesion receptor</keyword>
<keyword id="KW-1161">Viral attachment to host cell</keyword>
<keyword id="KW-1230">Viral tail fiber protein</keyword>
<keyword id="KW-1227">Viral tail protein</keyword>
<keyword id="KW-0946">Virion</keyword>
<keyword id="KW-1160">Virus entry into host cell</keyword>
<protein>
    <recommendedName>
        <fullName evidence="6">Probable tail spike protein</fullName>
    </recommendedName>
    <alternativeName>
        <fullName evidence="6">Depolymerase, capsule K35-specific</fullName>
    </alternativeName>
    <component>
        <recommendedName>
            <fullName evidence="1">Mature tail spike protein</fullName>
        </recommendedName>
    </component>
    <component>
        <recommendedName>
            <fullName evidence="1">Intramolecular chaperone</fullName>
        </recommendedName>
    </component>
</protein>
<feature type="chain" id="PRO_0000458697" description="Probable tail spike protein">
    <location>
        <begin position="1"/>
        <end position="779"/>
    </location>
</feature>
<feature type="chain" id="PRO_0000458698" description="Mature tail spike protein" evidence="3">
    <location>
        <begin position="1"/>
        <end position="653"/>
    </location>
</feature>
<feature type="chain" id="PRO_0000458699" description="Intramolecular chaperone" evidence="3">
    <location>
        <begin position="654"/>
        <end position="779"/>
    </location>
</feature>
<feature type="domain" description="Peptidase S74" evidence="4">
    <location>
        <begin position="653"/>
        <end position="779"/>
    </location>
</feature>
<feature type="site" description="Cleavage; by autolysis" evidence="1">
    <location>
        <begin position="653"/>
        <end position="654"/>
    </location>
</feature>
<gene>
    <name evidence="8" type="primary">S2-3</name>
</gene>
<dbReference type="EMBL" id="AB897757">
    <property type="protein sequence ID" value="BAQ02840.1"/>
    <property type="molecule type" value="Genomic_DNA"/>
</dbReference>
<dbReference type="EMBL" id="LC121103">
    <property type="protein sequence ID" value="BAW85697.1"/>
    <property type="molecule type" value="Genomic_DNA"/>
</dbReference>
<dbReference type="RefSeq" id="YP_009153200.1">
    <property type="nucleotide sequence ID" value="NC_027399.1"/>
</dbReference>
<dbReference type="SMR" id="A0A0A8JA06"/>
<dbReference type="OrthoDB" id="25949at10239"/>
<dbReference type="Proteomes" id="UP000202478">
    <property type="component" value="Genome"/>
</dbReference>
<dbReference type="GO" id="GO:0098024">
    <property type="term" value="C:virus tail, fiber"/>
    <property type="evidence" value="ECO:0007669"/>
    <property type="project" value="UniProtKB-KW"/>
</dbReference>
<dbReference type="GO" id="GO:0016829">
    <property type="term" value="F:lyase activity"/>
    <property type="evidence" value="ECO:0007669"/>
    <property type="project" value="UniProtKB-KW"/>
</dbReference>
<dbReference type="GO" id="GO:0008233">
    <property type="term" value="F:peptidase activity"/>
    <property type="evidence" value="ECO:0007669"/>
    <property type="project" value="UniProtKB-KW"/>
</dbReference>
<dbReference type="GO" id="GO:0098671">
    <property type="term" value="P:adhesion receptor-mediated virion attachment to host cell"/>
    <property type="evidence" value="ECO:0007669"/>
    <property type="project" value="UniProtKB-KW"/>
</dbReference>
<dbReference type="GO" id="GO:0006508">
    <property type="term" value="P:proteolysis"/>
    <property type="evidence" value="ECO:0007669"/>
    <property type="project" value="UniProtKB-KW"/>
</dbReference>
<dbReference type="GO" id="GO:0098994">
    <property type="term" value="P:symbiont entry into host cell via disruption of host cell envelope"/>
    <property type="evidence" value="ECO:0007669"/>
    <property type="project" value="UniProtKB-KW"/>
</dbReference>
<dbReference type="GO" id="GO:0098996">
    <property type="term" value="P:symbiont entry into host cell via disruption of host cell glycocalyx"/>
    <property type="evidence" value="ECO:0000314"/>
    <property type="project" value="UniProtKB"/>
</dbReference>
<dbReference type="CDD" id="cd10144">
    <property type="entry name" value="Peptidase_S74_CIMCD"/>
    <property type="match status" value="1"/>
</dbReference>
<dbReference type="Gene3D" id="3.30.2020.50">
    <property type="match status" value="1"/>
</dbReference>
<dbReference type="Gene3D" id="1.10.10.10">
    <property type="entry name" value="Winged helix-like DNA-binding domain superfamily/Winged helix DNA-binding domain"/>
    <property type="match status" value="1"/>
</dbReference>
<dbReference type="InterPro" id="IPR030392">
    <property type="entry name" value="S74_ICA"/>
</dbReference>
<dbReference type="InterPro" id="IPR036388">
    <property type="entry name" value="WH-like_DNA-bd_sf"/>
</dbReference>
<dbReference type="Pfam" id="PF13884">
    <property type="entry name" value="Peptidase_S74"/>
    <property type="match status" value="1"/>
</dbReference>
<dbReference type="PROSITE" id="PS51688">
    <property type="entry name" value="ICA"/>
    <property type="match status" value="1"/>
</dbReference>
<accession>A0A0A8JA06</accession>
<evidence type="ECO:0000250" key="1">
    <source>
        <dbReference type="UniProtKB" id="O09496"/>
    </source>
</evidence>
<evidence type="ECO:0000250" key="2">
    <source>
        <dbReference type="UniProtKB" id="P49714"/>
    </source>
</evidence>
<evidence type="ECO:0000250" key="3">
    <source>
        <dbReference type="UniProtKB" id="Q04830"/>
    </source>
</evidence>
<evidence type="ECO:0000255" key="4">
    <source>
        <dbReference type="PROSITE-ProRule" id="PRU01025"/>
    </source>
</evidence>
<evidence type="ECO:0000269" key="5">
    <source>
    </source>
</evidence>
<evidence type="ECO:0000305" key="6"/>
<evidence type="ECO:0000305" key="7">
    <source>
    </source>
</evidence>
<evidence type="ECO:0000312" key="8">
    <source>
        <dbReference type="EMBL" id="BAW85697.1"/>
    </source>
</evidence>
<proteinExistence type="inferred from homology"/>
<organism>
    <name type="scientific">Klebsiella phage K64-1</name>
    <name type="common">Bacteriophage K64-1</name>
    <dbReference type="NCBI Taxonomy" id="1439894"/>
    <lineage>
        <taxon>Viruses</taxon>
        <taxon>Duplodnaviria</taxon>
        <taxon>Heunggongvirae</taxon>
        <taxon>Uroviricota</taxon>
        <taxon>Caudoviricetes</taxon>
        <taxon>Alcyoneusvirus</taxon>
        <taxon>Alcyoneusvirus K641</taxon>
    </lineage>
</organism>
<sequence length="779" mass="86524">MINGLIQPKGSVSKETNKNSIALSLGLKFSEVEYLSTEILIDTYIVVFDPISEMVFYVGNAKGNPQTWNLNSDGNLILTTDFSTYTLLKIGLSNPDTSLKIGYQRKKINDSLSSIESVAGYMNSNFVSIMEFQHLITSKPNLNDMETWDWSPALDAAISYVQSYIPQTAVNSQMYGVMPIVFPPGVFQYSTEMKFTKYLNSTGSLSTCYTLIGSGMTSTVLQPITQGQNAFTATQCKINLINIGFRSGASYQTGAVLGSSTAWLPVVHSNWRCVGFSGFARGVVANLLFDSTFEDIFIQNISNMQSTSDVSYGFTFEVYTGPANGGTTGDGSGDDSNQITFIRPTIETSNADNAILFNASSINSTYPHHAINVFGGHIETHNLKAKCYNLKNCFNVNFYGTIFSQNGSAVDTNYRLGYIEACYNINFKNCRQVTTNRLTAYSSTDVKSIKITGNSKNIIFDNNHFINPYYSLNTYNKGPSYNIDSDTATVLDDSYLVINCTFNTYTNRNITSKISISNKNICNKNHILTVNDNGELVVSYTTSTDYSVTPTDILSFTNTGQIKTNGSIQLGIYNGTAGSKSIDFYSNGDKTTSMARILVDSSGRLYIRSFNGSQEWVFGSNAITPTTTSVYSIGSPSLTVNNLYVQNPVTVVSDENYKSNIQKIPDELLDAWENVEFNMWKMKAAINVKGITDARWHVGYIAQKIKSVLENAGLNWQDYGLITYESWIESEETYDQNGNVLSPYKAEGEIYMLRMEECLAVEMAYQRRKLDRIEKQLQK</sequence>
<name>DPO23_BPK64</name>
<organismHost>
    <name type="scientific">Klebsiella</name>
    <dbReference type="NCBI Taxonomy" id="570"/>
</organismHost>